<sequence length="644" mass="72664">MNVSIEGQMLEVASGASCGDALKGALSGKKFKNVLACRLDGGLVDITATVPDGTTTIEPVYADSPEGLDLIRHSTAHIMACAVKRLFPAAKVTIGPSIDNGFYYDFDAERPFSPEDFEAIEREMQKIVDAATPFERSEMPRDEAVALFEGMGETYKVEIIRDLPNDTVSLYRCGEFVDLCRGPHIPHAGFAKAFKLMSVAGAYWRGDEKNPMLSRIYGTAFADAKTLKEHLHRIEEAKRRDHRKLGQQLDLFAFHEDVAPGMVFWHPKGMLVRTIIEDFLRKEHLKRRYDIVQGPQLLRRELWEKSGHYDNYRENMYFTEIDENAYGVKPMNCLAHMLIYRSAIRSYRDLPKRFFELGVVHRHEKSGVLHGLLRVRQFTQDDAHIICRPDQLEDEIIDVIALVRDLMNLFGFDYKVAVSTRPEKSIGSDEAWELATNALVKAVERAGIPYTINEGDGAFYGPKIDVRLMDCIGREWQCSTIQCDFTLPERFDLVYVGQDGERHRPVMVHRAILGSLERFIGVLIEQYAGAFPAWLAPVQARLLTVTDAQNEFVESARAALAKAGIRVEADVRNEKLGYKVREAQLEKIPYILVVGDKEVEAGGVNVRLRTGENLGLKSLDEVVSLLESDCQEPFKRGGMSYSFS</sequence>
<protein>
    <recommendedName>
        <fullName evidence="1">Threonine--tRNA ligase</fullName>
        <ecNumber evidence="1">6.1.1.3</ecNumber>
    </recommendedName>
    <alternativeName>
        <fullName evidence="1">Threonyl-tRNA synthetase</fullName>
        <shortName evidence="1">ThrRS</shortName>
    </alternativeName>
</protein>
<evidence type="ECO:0000255" key="1">
    <source>
        <dbReference type="HAMAP-Rule" id="MF_00184"/>
    </source>
</evidence>
<evidence type="ECO:0000255" key="2">
    <source>
        <dbReference type="PROSITE-ProRule" id="PRU01228"/>
    </source>
</evidence>
<proteinExistence type="inferred from homology"/>
<comment type="function">
    <text evidence="1">Catalyzes the attachment of threonine to tRNA(Thr) in a two-step reaction: L-threonine is first activated by ATP to form Thr-AMP and then transferred to the acceptor end of tRNA(Thr). Also edits incorrectly charged L-seryl-tRNA(Thr).</text>
</comment>
<comment type="catalytic activity">
    <reaction evidence="1">
        <text>tRNA(Thr) + L-threonine + ATP = L-threonyl-tRNA(Thr) + AMP + diphosphate + H(+)</text>
        <dbReference type="Rhea" id="RHEA:24624"/>
        <dbReference type="Rhea" id="RHEA-COMP:9670"/>
        <dbReference type="Rhea" id="RHEA-COMP:9704"/>
        <dbReference type="ChEBI" id="CHEBI:15378"/>
        <dbReference type="ChEBI" id="CHEBI:30616"/>
        <dbReference type="ChEBI" id="CHEBI:33019"/>
        <dbReference type="ChEBI" id="CHEBI:57926"/>
        <dbReference type="ChEBI" id="CHEBI:78442"/>
        <dbReference type="ChEBI" id="CHEBI:78534"/>
        <dbReference type="ChEBI" id="CHEBI:456215"/>
        <dbReference type="EC" id="6.1.1.3"/>
    </reaction>
</comment>
<comment type="cofactor">
    <cofactor evidence="1">
        <name>Zn(2+)</name>
        <dbReference type="ChEBI" id="CHEBI:29105"/>
    </cofactor>
    <text evidence="1">Binds 1 zinc ion per subunit.</text>
</comment>
<comment type="subunit">
    <text evidence="1">Homodimer.</text>
</comment>
<comment type="subcellular location">
    <subcellularLocation>
        <location evidence="1">Cytoplasm</location>
    </subcellularLocation>
</comment>
<comment type="similarity">
    <text evidence="1">Belongs to the class-II aminoacyl-tRNA synthetase family.</text>
</comment>
<gene>
    <name evidence="1" type="primary">thrS</name>
    <name type="ordered locus">Dvul_0707</name>
</gene>
<name>SYT_NITV4</name>
<dbReference type="EC" id="6.1.1.3" evidence="1"/>
<dbReference type="EMBL" id="CP000527">
    <property type="protein sequence ID" value="ABM27730.1"/>
    <property type="molecule type" value="Genomic_DNA"/>
</dbReference>
<dbReference type="RefSeq" id="WP_010939808.1">
    <property type="nucleotide sequence ID" value="NC_008751.1"/>
</dbReference>
<dbReference type="SMR" id="A1VBB4"/>
<dbReference type="KEGG" id="dvl:Dvul_0707"/>
<dbReference type="HOGENOM" id="CLU_008554_0_1_7"/>
<dbReference type="Proteomes" id="UP000009173">
    <property type="component" value="Chromosome"/>
</dbReference>
<dbReference type="GO" id="GO:0005829">
    <property type="term" value="C:cytosol"/>
    <property type="evidence" value="ECO:0007669"/>
    <property type="project" value="TreeGrafter"/>
</dbReference>
<dbReference type="GO" id="GO:0005524">
    <property type="term" value="F:ATP binding"/>
    <property type="evidence" value="ECO:0007669"/>
    <property type="project" value="UniProtKB-UniRule"/>
</dbReference>
<dbReference type="GO" id="GO:0046872">
    <property type="term" value="F:metal ion binding"/>
    <property type="evidence" value="ECO:0007669"/>
    <property type="project" value="UniProtKB-KW"/>
</dbReference>
<dbReference type="GO" id="GO:0004829">
    <property type="term" value="F:threonine-tRNA ligase activity"/>
    <property type="evidence" value="ECO:0007669"/>
    <property type="project" value="UniProtKB-UniRule"/>
</dbReference>
<dbReference type="GO" id="GO:0000049">
    <property type="term" value="F:tRNA binding"/>
    <property type="evidence" value="ECO:0007669"/>
    <property type="project" value="UniProtKB-KW"/>
</dbReference>
<dbReference type="GO" id="GO:0006435">
    <property type="term" value="P:threonyl-tRNA aminoacylation"/>
    <property type="evidence" value="ECO:0007669"/>
    <property type="project" value="UniProtKB-UniRule"/>
</dbReference>
<dbReference type="CDD" id="cd00860">
    <property type="entry name" value="ThrRS_anticodon"/>
    <property type="match status" value="1"/>
</dbReference>
<dbReference type="CDD" id="cd00771">
    <property type="entry name" value="ThrRS_core"/>
    <property type="match status" value="1"/>
</dbReference>
<dbReference type="FunFam" id="3.30.54.20:FF:000002">
    <property type="entry name" value="Threonine--tRNA ligase"/>
    <property type="match status" value="1"/>
</dbReference>
<dbReference type="FunFam" id="3.30.930.10:FF:000002">
    <property type="entry name" value="Threonine--tRNA ligase"/>
    <property type="match status" value="1"/>
</dbReference>
<dbReference type="FunFam" id="3.40.50.800:FF:000001">
    <property type="entry name" value="Threonine--tRNA ligase"/>
    <property type="match status" value="1"/>
</dbReference>
<dbReference type="FunFam" id="3.30.980.10:FF:000005">
    <property type="entry name" value="Threonyl-tRNA synthetase, mitochondrial"/>
    <property type="match status" value="1"/>
</dbReference>
<dbReference type="Gene3D" id="3.30.54.20">
    <property type="match status" value="1"/>
</dbReference>
<dbReference type="Gene3D" id="3.40.50.800">
    <property type="entry name" value="Anticodon-binding domain"/>
    <property type="match status" value="1"/>
</dbReference>
<dbReference type="Gene3D" id="3.30.930.10">
    <property type="entry name" value="Bira Bifunctional Protein, Domain 2"/>
    <property type="match status" value="1"/>
</dbReference>
<dbReference type="Gene3D" id="3.30.980.10">
    <property type="entry name" value="Threonyl-trna Synthetase, Chain A, domain 2"/>
    <property type="match status" value="1"/>
</dbReference>
<dbReference type="HAMAP" id="MF_00184">
    <property type="entry name" value="Thr_tRNA_synth"/>
    <property type="match status" value="1"/>
</dbReference>
<dbReference type="InterPro" id="IPR002314">
    <property type="entry name" value="aa-tRNA-synt_IIb"/>
</dbReference>
<dbReference type="InterPro" id="IPR006195">
    <property type="entry name" value="aa-tRNA-synth_II"/>
</dbReference>
<dbReference type="InterPro" id="IPR045864">
    <property type="entry name" value="aa-tRNA-synth_II/BPL/LPL"/>
</dbReference>
<dbReference type="InterPro" id="IPR004154">
    <property type="entry name" value="Anticodon-bd"/>
</dbReference>
<dbReference type="InterPro" id="IPR036621">
    <property type="entry name" value="Anticodon-bd_dom_sf"/>
</dbReference>
<dbReference type="InterPro" id="IPR004095">
    <property type="entry name" value="TGS"/>
</dbReference>
<dbReference type="InterPro" id="IPR002320">
    <property type="entry name" value="Thr-tRNA-ligase_IIa"/>
</dbReference>
<dbReference type="InterPro" id="IPR018163">
    <property type="entry name" value="Thr/Ala-tRNA-synth_IIc_edit"/>
</dbReference>
<dbReference type="InterPro" id="IPR047246">
    <property type="entry name" value="ThrRS_anticodon"/>
</dbReference>
<dbReference type="InterPro" id="IPR033728">
    <property type="entry name" value="ThrRS_core"/>
</dbReference>
<dbReference type="InterPro" id="IPR012947">
    <property type="entry name" value="tRNA_SAD"/>
</dbReference>
<dbReference type="NCBIfam" id="TIGR00418">
    <property type="entry name" value="thrS"/>
    <property type="match status" value="1"/>
</dbReference>
<dbReference type="PANTHER" id="PTHR11451:SF44">
    <property type="entry name" value="THREONINE--TRNA LIGASE, CHLOROPLASTIC_MITOCHONDRIAL 2"/>
    <property type="match status" value="1"/>
</dbReference>
<dbReference type="PANTHER" id="PTHR11451">
    <property type="entry name" value="THREONINE-TRNA LIGASE"/>
    <property type="match status" value="1"/>
</dbReference>
<dbReference type="Pfam" id="PF03129">
    <property type="entry name" value="HGTP_anticodon"/>
    <property type="match status" value="1"/>
</dbReference>
<dbReference type="Pfam" id="PF00587">
    <property type="entry name" value="tRNA-synt_2b"/>
    <property type="match status" value="1"/>
</dbReference>
<dbReference type="Pfam" id="PF07973">
    <property type="entry name" value="tRNA_SAD"/>
    <property type="match status" value="1"/>
</dbReference>
<dbReference type="PRINTS" id="PR01047">
    <property type="entry name" value="TRNASYNTHTHR"/>
</dbReference>
<dbReference type="SMART" id="SM00863">
    <property type="entry name" value="tRNA_SAD"/>
    <property type="match status" value="1"/>
</dbReference>
<dbReference type="SUPFAM" id="SSF52954">
    <property type="entry name" value="Class II aaRS ABD-related"/>
    <property type="match status" value="1"/>
</dbReference>
<dbReference type="SUPFAM" id="SSF55681">
    <property type="entry name" value="Class II aaRS and biotin synthetases"/>
    <property type="match status" value="1"/>
</dbReference>
<dbReference type="SUPFAM" id="SSF55186">
    <property type="entry name" value="ThrRS/AlaRS common domain"/>
    <property type="match status" value="1"/>
</dbReference>
<dbReference type="PROSITE" id="PS50862">
    <property type="entry name" value="AA_TRNA_LIGASE_II"/>
    <property type="match status" value="1"/>
</dbReference>
<dbReference type="PROSITE" id="PS51880">
    <property type="entry name" value="TGS"/>
    <property type="match status" value="1"/>
</dbReference>
<keyword id="KW-0030">Aminoacyl-tRNA synthetase</keyword>
<keyword id="KW-0067">ATP-binding</keyword>
<keyword id="KW-0963">Cytoplasm</keyword>
<keyword id="KW-0436">Ligase</keyword>
<keyword id="KW-0479">Metal-binding</keyword>
<keyword id="KW-0547">Nucleotide-binding</keyword>
<keyword id="KW-0648">Protein biosynthesis</keyword>
<keyword id="KW-0694">RNA-binding</keyword>
<keyword id="KW-0820">tRNA-binding</keyword>
<keyword id="KW-0862">Zinc</keyword>
<accession>A1VBB4</accession>
<organism>
    <name type="scientific">Nitratidesulfovibrio vulgaris (strain DP4)</name>
    <name type="common">Desulfovibrio vulgaris</name>
    <dbReference type="NCBI Taxonomy" id="391774"/>
    <lineage>
        <taxon>Bacteria</taxon>
        <taxon>Pseudomonadati</taxon>
        <taxon>Thermodesulfobacteriota</taxon>
        <taxon>Desulfovibrionia</taxon>
        <taxon>Desulfovibrionales</taxon>
        <taxon>Desulfovibrionaceae</taxon>
        <taxon>Nitratidesulfovibrio</taxon>
    </lineage>
</organism>
<feature type="chain" id="PRO_1000058423" description="Threonine--tRNA ligase">
    <location>
        <begin position="1"/>
        <end position="644"/>
    </location>
</feature>
<feature type="domain" description="TGS" evidence="2">
    <location>
        <begin position="1"/>
        <end position="61"/>
    </location>
</feature>
<feature type="region of interest" description="Catalytic" evidence="1">
    <location>
        <begin position="241"/>
        <end position="532"/>
    </location>
</feature>
<feature type="binding site" evidence="1">
    <location>
        <position position="333"/>
    </location>
    <ligand>
        <name>Zn(2+)</name>
        <dbReference type="ChEBI" id="CHEBI:29105"/>
    </ligand>
</feature>
<feature type="binding site" evidence="1">
    <location>
        <position position="384"/>
    </location>
    <ligand>
        <name>Zn(2+)</name>
        <dbReference type="ChEBI" id="CHEBI:29105"/>
    </ligand>
</feature>
<feature type="binding site" evidence="1">
    <location>
        <position position="509"/>
    </location>
    <ligand>
        <name>Zn(2+)</name>
        <dbReference type="ChEBI" id="CHEBI:29105"/>
    </ligand>
</feature>
<reference key="1">
    <citation type="journal article" date="2009" name="Environ. Microbiol.">
        <title>Contribution of mobile genetic elements to Desulfovibrio vulgaris genome plasticity.</title>
        <authorList>
            <person name="Walker C.B."/>
            <person name="Stolyar S."/>
            <person name="Chivian D."/>
            <person name="Pinel N."/>
            <person name="Gabster J.A."/>
            <person name="Dehal P.S."/>
            <person name="He Z."/>
            <person name="Yang Z.K."/>
            <person name="Yen H.C."/>
            <person name="Zhou J."/>
            <person name="Wall J.D."/>
            <person name="Hazen T.C."/>
            <person name="Arkin A.P."/>
            <person name="Stahl D.A."/>
        </authorList>
    </citation>
    <scope>NUCLEOTIDE SEQUENCE [LARGE SCALE GENOMIC DNA]</scope>
    <source>
        <strain>DP4</strain>
    </source>
</reference>